<comment type="subcellular location">
    <subcellularLocation>
        <location evidence="1">Mitochondrion</location>
    </subcellularLocation>
</comment>
<comment type="miscellaneous">
    <text>A stretch of 270 kb of the mitochondrial genome is duplicated within the centromere of chromosome 2 resulting in the duplication of the gene. The expression of this duplicated gene (At2g07702) is demonstrated.</text>
</comment>
<sequence length="152" mass="17318">MPTILSSKPAFNSLFSYHLIGLISNKLVTLAPDYTGTKKTTWGARLHLQELRVQTKHRQIEPDIKNLPLQPIRYGSFRPVFHWIEKPCMLIGLCGLHSEVSFIANWPWGKPSEIGGCSIPCMLTGRGSELSYHIRASRRPLPGNRFHFQSFF</sequence>
<gene>
    <name evidence="3" type="ordered locus">AtMg00440</name>
</gene>
<gene>
    <name evidence="4" type="ordered locus">AtMg01140</name>
</gene>
<gene>
    <name evidence="2" type="ordered locus">At2g07702</name>
</gene>
<organism>
    <name type="scientific">Arabidopsis thaliana</name>
    <name type="common">Mouse-ear cress</name>
    <dbReference type="NCBI Taxonomy" id="3702"/>
    <lineage>
        <taxon>Eukaryota</taxon>
        <taxon>Viridiplantae</taxon>
        <taxon>Streptophyta</taxon>
        <taxon>Embryophyta</taxon>
        <taxon>Tracheophyta</taxon>
        <taxon>Spermatophyta</taxon>
        <taxon>Magnoliopsida</taxon>
        <taxon>eudicotyledons</taxon>
        <taxon>Gunneridae</taxon>
        <taxon>Pentapetalae</taxon>
        <taxon>rosids</taxon>
        <taxon>malvids</taxon>
        <taxon>Brassicales</taxon>
        <taxon>Brassicaceae</taxon>
        <taxon>Camelineae</taxon>
        <taxon>Arabidopsis</taxon>
    </lineage>
</organism>
<name>M440_ARATH</name>
<feature type="chain" id="PRO_0000196770" description="Uncharacterized mitochondrial protein AtMg00440/AtMg01140">
    <location>
        <begin position="1"/>
        <end position="152"/>
    </location>
</feature>
<feature type="sequence conflict" description="In Ref. 3; AAM15174." evidence="1" ref="3">
    <original>S</original>
    <variation>F</variation>
    <location>
        <position position="98"/>
    </location>
</feature>
<evidence type="ECO:0000305" key="1"/>
<evidence type="ECO:0000312" key="2">
    <source>
        <dbReference type="Araport" id="AT2G07702"/>
    </source>
</evidence>
<evidence type="ECO:0000312" key="3">
    <source>
        <dbReference type="Araport" id="ATMG00440"/>
    </source>
</evidence>
<evidence type="ECO:0000312" key="4">
    <source>
        <dbReference type="Araport" id="ATMG01140"/>
    </source>
</evidence>
<dbReference type="EMBL" id="Y08501">
    <property type="protein sequence ID" value="CAA69729.1"/>
    <property type="molecule type" value="Genomic_DNA"/>
</dbReference>
<dbReference type="EMBL" id="Y08501">
    <property type="protein sequence ID" value="CAA69798.1"/>
    <property type="molecule type" value="Genomic_DNA"/>
</dbReference>
<dbReference type="EMBL" id="BK010421">
    <property type="status" value="NOT_ANNOTATED_CDS"/>
    <property type="molecule type" value="Genomic_DNA"/>
</dbReference>
<dbReference type="EMBL" id="AC006225">
    <property type="protein sequence ID" value="AAM15174.1"/>
    <property type="molecule type" value="Genomic_DNA"/>
</dbReference>
<dbReference type="EMBL" id="AC007729">
    <property type="protein sequence ID" value="AAM15501.1"/>
    <property type="molecule type" value="Genomic_DNA"/>
</dbReference>
<dbReference type="EMBL" id="CP002685">
    <property type="protein sequence ID" value="AEC06092.1"/>
    <property type="molecule type" value="Genomic_DNA"/>
</dbReference>
<dbReference type="EMBL" id="AY649237">
    <property type="protein sequence ID" value="AAT69154.1"/>
    <property type="molecule type" value="Genomic_DNA"/>
</dbReference>
<dbReference type="EMBL" id="AY131999">
    <property type="protein sequence ID" value="AAM96889.1"/>
    <property type="molecule type" value="mRNA"/>
</dbReference>
<dbReference type="RefSeq" id="NP_085505.1">
    <property type="nucleotide sequence ID" value="NC_001284.2"/>
</dbReference>
<dbReference type="RefSeq" id="NP_085567.1">
    <property type="nucleotide sequence ID" value="NC_001284.2"/>
</dbReference>
<dbReference type="RefSeq" id="NP_565346.2">
    <property type="nucleotide sequence ID" value="NM_126769.3"/>
</dbReference>
<dbReference type="STRING" id="3702.P93300"/>
<dbReference type="PaxDb" id="3702-AT2G07702.1"/>
<dbReference type="EnsemblPlants" id="AT2G07702.1">
    <property type="protein sequence ID" value="AT2G07702.1"/>
    <property type="gene ID" value="AT2G07702"/>
</dbReference>
<dbReference type="EnsemblPlants" id="ATMG00440.1">
    <property type="protein sequence ID" value="ATMG00440.1"/>
    <property type="gene ID" value="ATMG00440"/>
</dbReference>
<dbReference type="EnsemblPlants" id="ATMG01140.1">
    <property type="protein sequence ID" value="ATMG01140.1"/>
    <property type="gene ID" value="ATMG01140"/>
</dbReference>
<dbReference type="GeneID" id="815377"/>
<dbReference type="Gramene" id="AT2G07702.1">
    <property type="protein sequence ID" value="AT2G07702.1"/>
    <property type="gene ID" value="AT2G07702"/>
</dbReference>
<dbReference type="Gramene" id="ATMG00440.1">
    <property type="protein sequence ID" value="ATMG00440.1"/>
    <property type="gene ID" value="ATMG00440"/>
</dbReference>
<dbReference type="Gramene" id="ATMG01140.1">
    <property type="protein sequence ID" value="ATMG01140.1"/>
    <property type="gene ID" value="ATMG01140"/>
</dbReference>
<dbReference type="KEGG" id="ath:AT2G07702"/>
<dbReference type="Araport" id="AT2G07702"/>
<dbReference type="Araport" id="ATMG00440"/>
<dbReference type="Araport" id="ATMG01140"/>
<dbReference type="TAIR" id="AT2G07702"/>
<dbReference type="TAIR" id="ATMG00440">
    <property type="gene designation" value="ORF152A"/>
</dbReference>
<dbReference type="TAIR" id="ATMG01140">
    <property type="gene designation" value="ORF152B"/>
</dbReference>
<dbReference type="HOGENOM" id="CLU_1724804_0_0_1"/>
<dbReference type="InParanoid" id="P93300"/>
<dbReference type="OrthoDB" id="1114360at2759"/>
<dbReference type="PRO" id="PR:P93300"/>
<dbReference type="Proteomes" id="UP000006548">
    <property type="component" value="Chromosome 2"/>
</dbReference>
<dbReference type="Proteomes" id="UP000006548">
    <property type="component" value="Mitochondrion MT"/>
</dbReference>
<dbReference type="ExpressionAtlas" id="P93300">
    <property type="expression patterns" value="baseline"/>
</dbReference>
<dbReference type="GO" id="GO:0005739">
    <property type="term" value="C:mitochondrion"/>
    <property type="evidence" value="ECO:0007669"/>
    <property type="project" value="UniProtKB-SubCell"/>
</dbReference>
<keyword id="KW-0496">Mitochondrion</keyword>
<keyword id="KW-1185">Reference proteome</keyword>
<reference key="1">
    <citation type="journal article" date="1997" name="Nat. Genet.">
        <title>The mitochondrial genome of Arabidopsis thaliana contains 57 genes in 366,924 nucleotides.</title>
        <authorList>
            <person name="Unseld M."/>
            <person name="Marienfeld J.R."/>
            <person name="Brandt P."/>
            <person name="Brennicke A."/>
        </authorList>
    </citation>
    <scope>NUCLEOTIDE SEQUENCE [LARGE SCALE GENOMIC DNA]</scope>
    <source>
        <strain>cv. C24</strain>
    </source>
</reference>
<reference key="2">
    <citation type="journal article" date="2018" name="Plant Cell">
        <title>Correction of persistent errors in Arabidopsis reference mitochondrial genomes.</title>
        <authorList>
            <person name="Sloan D.B."/>
            <person name="Wu Z."/>
            <person name="Sharbrough J."/>
        </authorList>
    </citation>
    <scope>NUCLEOTIDE SEQUENCE [LARGE SCALE GENOMIC DNA]</scope>
    <source>
        <strain>cv. Columbia</strain>
    </source>
</reference>
<reference key="3">
    <citation type="journal article" date="1999" name="Nature">
        <title>Sequence and analysis of chromosome 2 of the plant Arabidopsis thaliana.</title>
        <authorList>
            <person name="Lin X."/>
            <person name="Kaul S."/>
            <person name="Rounsley S.D."/>
            <person name="Shea T.P."/>
            <person name="Benito M.-I."/>
            <person name="Town C.D."/>
            <person name="Fujii C.Y."/>
            <person name="Mason T.M."/>
            <person name="Bowman C.L."/>
            <person name="Barnstead M.E."/>
            <person name="Feldblyum T.V."/>
            <person name="Buell C.R."/>
            <person name="Ketchum K.A."/>
            <person name="Lee J.J."/>
            <person name="Ronning C.M."/>
            <person name="Koo H.L."/>
            <person name="Moffat K.S."/>
            <person name="Cronin L.A."/>
            <person name="Shen M."/>
            <person name="Pai G."/>
            <person name="Van Aken S."/>
            <person name="Umayam L."/>
            <person name="Tallon L.J."/>
            <person name="Gill J.E."/>
            <person name="Adams M.D."/>
            <person name="Carrera A.J."/>
            <person name="Creasy T.H."/>
            <person name="Goodman H.M."/>
            <person name="Somerville C.R."/>
            <person name="Copenhaver G.P."/>
            <person name="Preuss D."/>
            <person name="Nierman W.C."/>
            <person name="White O."/>
            <person name="Eisen J.A."/>
            <person name="Salzberg S.L."/>
            <person name="Fraser C.M."/>
            <person name="Venter J.C."/>
        </authorList>
    </citation>
    <scope>NUCLEOTIDE SEQUENCE [LARGE SCALE GENOMIC DNA] (AT2G07702)</scope>
    <source>
        <strain>cv. Columbia</strain>
    </source>
</reference>
<reference key="4">
    <citation type="journal article" date="2017" name="Plant J.">
        <title>Araport11: a complete reannotation of the Arabidopsis thaliana reference genome.</title>
        <authorList>
            <person name="Cheng C.Y."/>
            <person name="Krishnakumar V."/>
            <person name="Chan A.P."/>
            <person name="Thibaud-Nissen F."/>
            <person name="Schobel S."/>
            <person name="Town C.D."/>
        </authorList>
    </citation>
    <scope>GENOME REANNOTATION (AT2G07702)</scope>
    <source>
        <strain>cv. Columbia</strain>
    </source>
</reference>
<reference key="5">
    <citation type="submission" date="2004-06" db="EMBL/GenBank/DDBJ databases">
        <authorList>
            <person name="Underwood B.A."/>
            <person name="Xiao Y.-L."/>
            <person name="Moskal W.A. Jr."/>
            <person name="Monaghan E.L."/>
            <person name="Wang W."/>
            <person name="Redman J.C."/>
            <person name="Wu H.C."/>
            <person name="Utterback T."/>
            <person name="Town C.D."/>
        </authorList>
    </citation>
    <scope>NUCLEOTIDE SEQUENCE [LARGE SCALE GENOMIC DNA] (AT2G07702)</scope>
    <source>
        <strain>cv. Columbia</strain>
    </source>
</reference>
<reference key="6">
    <citation type="journal article" date="2005" name="Plant Physiol.">
        <title>Analysis of the cDNAs of hypothetical genes on Arabidopsis chromosome 2 reveals numerous transcript variants.</title>
        <authorList>
            <person name="Xiao Y.-L."/>
            <person name="Smith S.R."/>
            <person name="Ishmael N."/>
            <person name="Redman J.C."/>
            <person name="Kumar N."/>
            <person name="Monaghan E.L."/>
            <person name="Ayele M."/>
            <person name="Haas B.J."/>
            <person name="Wu H.C."/>
            <person name="Town C.D."/>
        </authorList>
    </citation>
    <scope>NUCLEOTIDE SEQUENCE [LARGE SCALE MRNA] (AT2G07702)</scope>
    <source>
        <strain>cv. Columbia</strain>
    </source>
</reference>
<proteinExistence type="evidence at transcript level"/>
<geneLocation type="mitochondrion"/>
<accession>P93300</accession>
<accession>P92545</accession>
<accession>Q6DR78</accession>
<accession>Q8L7I5</accession>
<accession>Q8S8J3</accession>
<protein>
    <recommendedName>
        <fullName>Uncharacterized mitochondrial protein AtMg00440/AtMg01140</fullName>
    </recommendedName>
    <alternativeName>
        <fullName>ORF152a/ORF152b</fullName>
    </alternativeName>
</protein>